<comment type="function">
    <text evidence="1">Multidrug efflux pump.</text>
</comment>
<comment type="subcellular location">
    <subcellularLocation>
        <location evidence="1">Cell inner membrane</location>
        <topology evidence="1">Multi-pass membrane protein</topology>
    </subcellularLocation>
</comment>
<comment type="similarity">
    <text evidence="3">Belongs to the multi antimicrobial extrusion (MATE) (TC 2.A.66.1) family.</text>
</comment>
<feature type="chain" id="PRO_0000164237" description="Probable multidrug resistance protein NorM">
    <location>
        <begin position="1"/>
        <end position="474"/>
    </location>
</feature>
<feature type="transmembrane region" description="Helical" evidence="2">
    <location>
        <begin position="33"/>
        <end position="50"/>
    </location>
</feature>
<feature type="transmembrane region" description="Helical" evidence="2">
    <location>
        <begin position="65"/>
        <end position="87"/>
    </location>
</feature>
<feature type="transmembrane region" description="Helical" evidence="2">
    <location>
        <begin position="108"/>
        <end position="130"/>
    </location>
</feature>
<feature type="transmembrane region" description="Helical" evidence="2">
    <location>
        <begin position="150"/>
        <end position="172"/>
    </location>
</feature>
<feature type="transmembrane region" description="Helical" evidence="2">
    <location>
        <begin position="179"/>
        <end position="201"/>
    </location>
</feature>
<feature type="transmembrane region" description="Helical" evidence="2">
    <location>
        <begin position="211"/>
        <end position="233"/>
    </location>
</feature>
<feature type="transmembrane region" description="Helical" evidence="2">
    <location>
        <begin position="258"/>
        <end position="280"/>
    </location>
</feature>
<feature type="transmembrane region" description="Helical" evidence="2">
    <location>
        <begin position="295"/>
        <end position="317"/>
    </location>
</feature>
<feature type="transmembrane region" description="Helical" evidence="2">
    <location>
        <begin position="334"/>
        <end position="356"/>
    </location>
</feature>
<feature type="transmembrane region" description="Helical" evidence="2">
    <location>
        <begin position="376"/>
        <end position="398"/>
    </location>
</feature>
<feature type="transmembrane region" description="Helical" evidence="2">
    <location>
        <begin position="410"/>
        <end position="432"/>
    </location>
</feature>
<feature type="transmembrane region" description="Helical" evidence="2">
    <location>
        <begin position="436"/>
        <end position="458"/>
    </location>
</feature>
<evidence type="ECO:0000250" key="1"/>
<evidence type="ECO:0000255" key="2"/>
<evidence type="ECO:0000305" key="3"/>
<sequence>MVRAMTAPGSNIAAGALAPAKSSAWRTELIETLWLAWPMALTQLGQIAMMTTDLALIGRLGDAAVAAAALAHFVLFSTFTMGLGLVSAVTPLAAQAFGARAPRQVRASLRVGLWAGVIAGVPLTLGQLYGEELLVALGQNPATSRLAGDYLDGLAWSLVPGWLFIALRGLMGAVNRPEPALWIMLTAIPINLGLAYVLIHGSFGLPRLEIFGAGLATSIVSWAMCIAAAVVCVTMRPFRKYQVFGELFRFDGELMRRLLQLGLPISGASVLEYGVFGAAALLMGKFGTTALAAHQIALQVAAIMFMVPMGISVAATVRVGHAVGRGDPPSARRAGFAAIGLGFVFMAAMTLLVALTRHQIPQLFLGDSDTSIETATLTAALLIVGASFFIADGLQVVANGALRGRNDTKVPLLFAVLGFWVIGFPFCWVLGFHTDLGPFGVWIGLAVGLVVYAALLVWRFHRLTRDAMAAAVAA</sequence>
<organism>
    <name type="scientific">Rhodopseudomonas palustris (strain ATCC BAA-98 / CGA009)</name>
    <dbReference type="NCBI Taxonomy" id="258594"/>
    <lineage>
        <taxon>Bacteria</taxon>
        <taxon>Pseudomonadati</taxon>
        <taxon>Pseudomonadota</taxon>
        <taxon>Alphaproteobacteria</taxon>
        <taxon>Hyphomicrobiales</taxon>
        <taxon>Nitrobacteraceae</taxon>
        <taxon>Rhodopseudomonas</taxon>
    </lineage>
</organism>
<accession>Q6NB79</accession>
<name>NORM_RHOPA</name>
<gene>
    <name type="primary">norM</name>
    <name type="ordered locus">RPA0949</name>
</gene>
<proteinExistence type="inferred from homology"/>
<keyword id="KW-0050">Antiport</keyword>
<keyword id="KW-0997">Cell inner membrane</keyword>
<keyword id="KW-1003">Cell membrane</keyword>
<keyword id="KW-0406">Ion transport</keyword>
<keyword id="KW-0472">Membrane</keyword>
<keyword id="KW-0812">Transmembrane</keyword>
<keyword id="KW-1133">Transmembrane helix</keyword>
<keyword id="KW-0813">Transport</keyword>
<reference key="1">
    <citation type="journal article" date="2004" name="Nat. Biotechnol.">
        <title>Complete genome sequence of the metabolically versatile photosynthetic bacterium Rhodopseudomonas palustris.</title>
        <authorList>
            <person name="Larimer F.W."/>
            <person name="Chain P."/>
            <person name="Hauser L."/>
            <person name="Lamerdin J.E."/>
            <person name="Malfatti S."/>
            <person name="Do L."/>
            <person name="Land M.L."/>
            <person name="Pelletier D.A."/>
            <person name="Beatty J.T."/>
            <person name="Lang A.S."/>
            <person name="Tabita F.R."/>
            <person name="Gibson J.L."/>
            <person name="Hanson T.E."/>
            <person name="Bobst C."/>
            <person name="Torres y Torres J.L."/>
            <person name="Peres C."/>
            <person name="Harrison F.H."/>
            <person name="Gibson J."/>
            <person name="Harwood C.S."/>
        </authorList>
    </citation>
    <scope>NUCLEOTIDE SEQUENCE [LARGE SCALE GENOMIC DNA]</scope>
    <source>
        <strain>ATCC BAA-98 / CGA009</strain>
    </source>
</reference>
<dbReference type="EMBL" id="BX572596">
    <property type="protein sequence ID" value="CAE26393.1"/>
    <property type="molecule type" value="Genomic_DNA"/>
</dbReference>
<dbReference type="RefSeq" id="WP_011156484.1">
    <property type="nucleotide sequence ID" value="NZ_CP116810.1"/>
</dbReference>
<dbReference type="SMR" id="Q6NB79"/>
<dbReference type="STRING" id="258594.RPA0949"/>
<dbReference type="GeneID" id="66891968"/>
<dbReference type="eggNOG" id="COG0534">
    <property type="taxonomic scope" value="Bacteria"/>
</dbReference>
<dbReference type="HOGENOM" id="CLU_012893_6_3_5"/>
<dbReference type="PhylomeDB" id="Q6NB79"/>
<dbReference type="GO" id="GO:0005886">
    <property type="term" value="C:plasma membrane"/>
    <property type="evidence" value="ECO:0007669"/>
    <property type="project" value="UniProtKB-SubCell"/>
</dbReference>
<dbReference type="GO" id="GO:0015297">
    <property type="term" value="F:antiporter activity"/>
    <property type="evidence" value="ECO:0007669"/>
    <property type="project" value="UniProtKB-KW"/>
</dbReference>
<dbReference type="GO" id="GO:0042910">
    <property type="term" value="F:xenobiotic transmembrane transporter activity"/>
    <property type="evidence" value="ECO:0007669"/>
    <property type="project" value="InterPro"/>
</dbReference>
<dbReference type="GO" id="GO:0006811">
    <property type="term" value="P:monoatomic ion transport"/>
    <property type="evidence" value="ECO:0007669"/>
    <property type="project" value="UniProtKB-KW"/>
</dbReference>
<dbReference type="CDD" id="cd13131">
    <property type="entry name" value="MATE_NorM_like"/>
    <property type="match status" value="1"/>
</dbReference>
<dbReference type="InterPro" id="IPR002528">
    <property type="entry name" value="MATE_fam"/>
</dbReference>
<dbReference type="InterPro" id="IPR050222">
    <property type="entry name" value="MATE_MdtK"/>
</dbReference>
<dbReference type="InterPro" id="IPR048279">
    <property type="entry name" value="MdtK-like"/>
</dbReference>
<dbReference type="NCBIfam" id="TIGR00797">
    <property type="entry name" value="matE"/>
    <property type="match status" value="1"/>
</dbReference>
<dbReference type="PANTHER" id="PTHR43298:SF2">
    <property type="entry name" value="FMN_FAD EXPORTER YEEO-RELATED"/>
    <property type="match status" value="1"/>
</dbReference>
<dbReference type="PANTHER" id="PTHR43298">
    <property type="entry name" value="MULTIDRUG RESISTANCE PROTEIN NORM-RELATED"/>
    <property type="match status" value="1"/>
</dbReference>
<dbReference type="Pfam" id="PF01554">
    <property type="entry name" value="MatE"/>
    <property type="match status" value="2"/>
</dbReference>
<dbReference type="PIRSF" id="PIRSF006603">
    <property type="entry name" value="DinF"/>
    <property type="match status" value="1"/>
</dbReference>
<protein>
    <recommendedName>
        <fullName>Probable multidrug resistance protein NorM</fullName>
    </recommendedName>
    <alternativeName>
        <fullName>Multidrug-efflux transporter</fullName>
    </alternativeName>
</protein>